<proteinExistence type="inferred from homology"/>
<reference key="1">
    <citation type="journal article" date="2000" name="Nature">
        <title>Genome sequence of the endocellular bacterial symbiont of aphids Buchnera sp. APS.</title>
        <authorList>
            <person name="Shigenobu S."/>
            <person name="Watanabe H."/>
            <person name="Hattori M."/>
            <person name="Sakaki Y."/>
            <person name="Ishikawa H."/>
        </authorList>
    </citation>
    <scope>NUCLEOTIDE SEQUENCE [LARGE SCALE GENOMIC DNA]</scope>
    <source>
        <strain>APS</strain>
    </source>
</reference>
<organism>
    <name type="scientific">Buchnera aphidicola subsp. Acyrthosiphon pisum (strain APS)</name>
    <name type="common">Acyrthosiphon pisum symbiotic bacterium</name>
    <dbReference type="NCBI Taxonomy" id="107806"/>
    <lineage>
        <taxon>Bacteria</taxon>
        <taxon>Pseudomonadati</taxon>
        <taxon>Pseudomonadota</taxon>
        <taxon>Gammaproteobacteria</taxon>
        <taxon>Enterobacterales</taxon>
        <taxon>Erwiniaceae</taxon>
        <taxon>Buchnera</taxon>
    </lineage>
</organism>
<name>AROQ_BUCAI</name>
<dbReference type="EC" id="4.2.1.10"/>
<dbReference type="EMBL" id="BA000003">
    <property type="protein sequence ID" value="BAB13102.1"/>
    <property type="molecule type" value="Genomic_DNA"/>
</dbReference>
<dbReference type="RefSeq" id="NP_240216.1">
    <property type="nucleotide sequence ID" value="NC_002528.1"/>
</dbReference>
<dbReference type="RefSeq" id="WP_009874357.1">
    <property type="nucleotide sequence ID" value="NZ_AP036055.1"/>
</dbReference>
<dbReference type="SMR" id="P57479"/>
<dbReference type="STRING" id="563178.BUAP5A_392"/>
<dbReference type="EnsemblBacteria" id="BAB13102">
    <property type="protein sequence ID" value="BAB13102"/>
    <property type="gene ID" value="BAB13102"/>
</dbReference>
<dbReference type="KEGG" id="buc:BU399"/>
<dbReference type="PATRIC" id="fig|107806.10.peg.413"/>
<dbReference type="eggNOG" id="COG0757">
    <property type="taxonomic scope" value="Bacteria"/>
</dbReference>
<dbReference type="HOGENOM" id="CLU_090968_1_0_6"/>
<dbReference type="UniPathway" id="UPA00053">
    <property type="reaction ID" value="UER00086"/>
</dbReference>
<dbReference type="Proteomes" id="UP000001806">
    <property type="component" value="Chromosome"/>
</dbReference>
<dbReference type="GO" id="GO:0003855">
    <property type="term" value="F:3-dehydroquinate dehydratase activity"/>
    <property type="evidence" value="ECO:0007669"/>
    <property type="project" value="UniProtKB-UniRule"/>
</dbReference>
<dbReference type="GO" id="GO:0008652">
    <property type="term" value="P:amino acid biosynthetic process"/>
    <property type="evidence" value="ECO:0007669"/>
    <property type="project" value="UniProtKB-KW"/>
</dbReference>
<dbReference type="GO" id="GO:0009073">
    <property type="term" value="P:aromatic amino acid family biosynthetic process"/>
    <property type="evidence" value="ECO:0007669"/>
    <property type="project" value="UniProtKB-KW"/>
</dbReference>
<dbReference type="GO" id="GO:0009423">
    <property type="term" value="P:chorismate biosynthetic process"/>
    <property type="evidence" value="ECO:0007669"/>
    <property type="project" value="UniProtKB-UniRule"/>
</dbReference>
<dbReference type="GO" id="GO:0019631">
    <property type="term" value="P:quinate catabolic process"/>
    <property type="evidence" value="ECO:0007669"/>
    <property type="project" value="TreeGrafter"/>
</dbReference>
<dbReference type="CDD" id="cd00466">
    <property type="entry name" value="DHQase_II"/>
    <property type="match status" value="1"/>
</dbReference>
<dbReference type="Gene3D" id="3.40.50.9100">
    <property type="entry name" value="Dehydroquinase, class II"/>
    <property type="match status" value="1"/>
</dbReference>
<dbReference type="HAMAP" id="MF_00169">
    <property type="entry name" value="AroQ"/>
    <property type="match status" value="1"/>
</dbReference>
<dbReference type="InterPro" id="IPR001874">
    <property type="entry name" value="DHquinase_II"/>
</dbReference>
<dbReference type="InterPro" id="IPR018509">
    <property type="entry name" value="DHquinase_II_CS"/>
</dbReference>
<dbReference type="InterPro" id="IPR036441">
    <property type="entry name" value="DHquinase_II_sf"/>
</dbReference>
<dbReference type="NCBIfam" id="TIGR01088">
    <property type="entry name" value="aroQ"/>
    <property type="match status" value="1"/>
</dbReference>
<dbReference type="NCBIfam" id="NF003804">
    <property type="entry name" value="PRK05395.1-1"/>
    <property type="match status" value="1"/>
</dbReference>
<dbReference type="NCBIfam" id="NF003805">
    <property type="entry name" value="PRK05395.1-2"/>
    <property type="match status" value="1"/>
</dbReference>
<dbReference type="NCBIfam" id="NF003806">
    <property type="entry name" value="PRK05395.1-3"/>
    <property type="match status" value="1"/>
</dbReference>
<dbReference type="NCBIfam" id="NF003807">
    <property type="entry name" value="PRK05395.1-4"/>
    <property type="match status" value="1"/>
</dbReference>
<dbReference type="PANTHER" id="PTHR21272">
    <property type="entry name" value="CATABOLIC 3-DEHYDROQUINASE"/>
    <property type="match status" value="1"/>
</dbReference>
<dbReference type="PANTHER" id="PTHR21272:SF3">
    <property type="entry name" value="CATABOLIC 3-DEHYDROQUINASE"/>
    <property type="match status" value="1"/>
</dbReference>
<dbReference type="Pfam" id="PF01220">
    <property type="entry name" value="DHquinase_II"/>
    <property type="match status" value="1"/>
</dbReference>
<dbReference type="PIRSF" id="PIRSF001399">
    <property type="entry name" value="DHquinase_II"/>
    <property type="match status" value="1"/>
</dbReference>
<dbReference type="SUPFAM" id="SSF52304">
    <property type="entry name" value="Type II 3-dehydroquinate dehydratase"/>
    <property type="match status" value="1"/>
</dbReference>
<dbReference type="PROSITE" id="PS01029">
    <property type="entry name" value="DEHYDROQUINASE_II"/>
    <property type="match status" value="1"/>
</dbReference>
<gene>
    <name type="primary">aroQ</name>
    <name type="ordered locus">BU399</name>
</gene>
<feature type="chain" id="PRO_0000159883" description="3-dehydroquinate dehydratase">
    <location>
        <begin position="1"/>
        <end position="150"/>
    </location>
</feature>
<feature type="active site" description="Proton acceptor" evidence="1">
    <location>
        <position position="26"/>
    </location>
</feature>
<feature type="active site" description="Proton donor" evidence="1">
    <location>
        <position position="103"/>
    </location>
</feature>
<feature type="binding site" evidence="1">
    <location>
        <position position="77"/>
    </location>
    <ligand>
        <name>substrate</name>
    </ligand>
</feature>
<feature type="binding site" evidence="1">
    <location>
        <position position="83"/>
    </location>
    <ligand>
        <name>substrate</name>
    </ligand>
</feature>
<feature type="binding site" evidence="1">
    <location>
        <position position="90"/>
    </location>
    <ligand>
        <name>substrate</name>
    </ligand>
</feature>
<feature type="binding site" evidence="1">
    <location>
        <begin position="104"/>
        <end position="105"/>
    </location>
    <ligand>
        <name>substrate</name>
    </ligand>
</feature>
<feature type="binding site" evidence="1">
    <location>
        <position position="114"/>
    </location>
    <ligand>
        <name>substrate</name>
    </ligand>
</feature>
<feature type="site" description="Transition state stabilizer" evidence="1">
    <location>
        <position position="21"/>
    </location>
</feature>
<comment type="function">
    <text evidence="1">Catalyzes a trans-dehydration via an enolate intermediate.</text>
</comment>
<comment type="catalytic activity">
    <reaction>
        <text>3-dehydroquinate = 3-dehydroshikimate + H2O</text>
        <dbReference type="Rhea" id="RHEA:21096"/>
        <dbReference type="ChEBI" id="CHEBI:15377"/>
        <dbReference type="ChEBI" id="CHEBI:16630"/>
        <dbReference type="ChEBI" id="CHEBI:32364"/>
        <dbReference type="EC" id="4.2.1.10"/>
    </reaction>
</comment>
<comment type="pathway">
    <text>Metabolic intermediate biosynthesis; chorismate biosynthesis; chorismate from D-erythrose 4-phosphate and phosphoenolpyruvate: step 3/7.</text>
</comment>
<comment type="subunit">
    <text evidence="1">Homododecamer.</text>
</comment>
<comment type="similarity">
    <text evidence="2">Belongs to the type-II 3-dehydroquinase family.</text>
</comment>
<evidence type="ECO:0000250" key="1"/>
<evidence type="ECO:0000305" key="2"/>
<protein>
    <recommendedName>
        <fullName>3-dehydroquinate dehydratase</fullName>
        <shortName>3-dehydroquinase</shortName>
        <ecNumber>4.2.1.10</ecNumber>
    </recommendedName>
    <alternativeName>
        <fullName>Type II DHQase</fullName>
    </alternativeName>
</protein>
<accession>P57479</accession>
<sequence>MKNNINILLINGPNLNLLGTRETEIYGDITLPDLLKNLEKRAKKLNMSLKHIQSNAEHVLIDKIHSSRKNINYIIINPAAFTHTSIAIRDALIAVEIPFIEIHISNIYSREDFRSHSWLSDISQGVICGLGLDGYHWALETISNRLIHLK</sequence>
<keyword id="KW-0028">Amino-acid biosynthesis</keyword>
<keyword id="KW-0057">Aromatic amino acid biosynthesis</keyword>
<keyword id="KW-0456">Lyase</keyword>
<keyword id="KW-1185">Reference proteome</keyword>